<comment type="function">
    <text evidence="1">Catalyzes the addition of meso-diaminopimelic acid to the nucleotide precursor UDP-N-acetylmuramoyl-L-alanyl-D-glutamate (UMAG) in the biosynthesis of bacterial cell-wall peptidoglycan.</text>
</comment>
<comment type="catalytic activity">
    <reaction evidence="1">
        <text>UDP-N-acetyl-alpha-D-muramoyl-L-alanyl-D-glutamate + meso-2,6-diaminopimelate + ATP = UDP-N-acetyl-alpha-D-muramoyl-L-alanyl-gamma-D-glutamyl-meso-2,6-diaminopimelate + ADP + phosphate + H(+)</text>
        <dbReference type="Rhea" id="RHEA:23676"/>
        <dbReference type="ChEBI" id="CHEBI:15378"/>
        <dbReference type="ChEBI" id="CHEBI:30616"/>
        <dbReference type="ChEBI" id="CHEBI:43474"/>
        <dbReference type="ChEBI" id="CHEBI:57791"/>
        <dbReference type="ChEBI" id="CHEBI:83900"/>
        <dbReference type="ChEBI" id="CHEBI:83905"/>
        <dbReference type="ChEBI" id="CHEBI:456216"/>
        <dbReference type="EC" id="6.3.2.13"/>
    </reaction>
</comment>
<comment type="cofactor">
    <cofactor evidence="1">
        <name>Mg(2+)</name>
        <dbReference type="ChEBI" id="CHEBI:18420"/>
    </cofactor>
</comment>
<comment type="pathway">
    <text evidence="1">Cell wall biogenesis; peptidoglycan biosynthesis.</text>
</comment>
<comment type="subcellular location">
    <subcellularLocation>
        <location evidence="1">Cytoplasm</location>
    </subcellularLocation>
</comment>
<comment type="PTM">
    <text evidence="1">Carboxylation is probably crucial for Mg(2+) binding and, consequently, for the gamma-phosphate positioning of ATP.</text>
</comment>
<comment type="similarity">
    <text evidence="1">Belongs to the MurCDEF family. MurE subfamily.</text>
</comment>
<gene>
    <name evidence="1" type="primary">murE2</name>
    <name type="ordered locus">CA_C2819</name>
</gene>
<dbReference type="EC" id="6.3.2.13" evidence="1"/>
<dbReference type="EMBL" id="AE001437">
    <property type="protein sequence ID" value="AAK80763.1"/>
    <property type="molecule type" value="Genomic_DNA"/>
</dbReference>
<dbReference type="PIR" id="H97246">
    <property type="entry name" value="H97246"/>
</dbReference>
<dbReference type="RefSeq" id="NP_349423.1">
    <property type="nucleotide sequence ID" value="NC_003030.1"/>
</dbReference>
<dbReference type="RefSeq" id="WP_010966104.1">
    <property type="nucleotide sequence ID" value="NC_003030.1"/>
</dbReference>
<dbReference type="SMR" id="Q97FC1"/>
<dbReference type="STRING" id="272562.CA_C2819"/>
<dbReference type="KEGG" id="cac:CA_C2819"/>
<dbReference type="PATRIC" id="fig|272562.8.peg.3004"/>
<dbReference type="eggNOG" id="COG0769">
    <property type="taxonomic scope" value="Bacteria"/>
</dbReference>
<dbReference type="HOGENOM" id="CLU_022291_4_0_9"/>
<dbReference type="OrthoDB" id="9800958at2"/>
<dbReference type="UniPathway" id="UPA00219"/>
<dbReference type="Proteomes" id="UP000000814">
    <property type="component" value="Chromosome"/>
</dbReference>
<dbReference type="GO" id="GO:0005737">
    <property type="term" value="C:cytoplasm"/>
    <property type="evidence" value="ECO:0007669"/>
    <property type="project" value="UniProtKB-SubCell"/>
</dbReference>
<dbReference type="GO" id="GO:0005524">
    <property type="term" value="F:ATP binding"/>
    <property type="evidence" value="ECO:0007669"/>
    <property type="project" value="UniProtKB-UniRule"/>
</dbReference>
<dbReference type="GO" id="GO:0000287">
    <property type="term" value="F:magnesium ion binding"/>
    <property type="evidence" value="ECO:0007669"/>
    <property type="project" value="UniProtKB-UniRule"/>
</dbReference>
<dbReference type="GO" id="GO:0008765">
    <property type="term" value="F:UDP-N-acetylmuramoylalanyl-D-glutamate-2,6-diaminopimelate ligase activity"/>
    <property type="evidence" value="ECO:0007669"/>
    <property type="project" value="UniProtKB-UniRule"/>
</dbReference>
<dbReference type="GO" id="GO:0051301">
    <property type="term" value="P:cell division"/>
    <property type="evidence" value="ECO:0007669"/>
    <property type="project" value="UniProtKB-KW"/>
</dbReference>
<dbReference type="GO" id="GO:0071555">
    <property type="term" value="P:cell wall organization"/>
    <property type="evidence" value="ECO:0007669"/>
    <property type="project" value="UniProtKB-KW"/>
</dbReference>
<dbReference type="GO" id="GO:0009252">
    <property type="term" value="P:peptidoglycan biosynthetic process"/>
    <property type="evidence" value="ECO:0007669"/>
    <property type="project" value="UniProtKB-UniRule"/>
</dbReference>
<dbReference type="GO" id="GO:0008360">
    <property type="term" value="P:regulation of cell shape"/>
    <property type="evidence" value="ECO:0007669"/>
    <property type="project" value="UniProtKB-KW"/>
</dbReference>
<dbReference type="Gene3D" id="3.90.190.20">
    <property type="entry name" value="Mur ligase, C-terminal domain"/>
    <property type="match status" value="1"/>
</dbReference>
<dbReference type="Gene3D" id="3.40.1190.10">
    <property type="entry name" value="Mur-like, catalytic domain"/>
    <property type="match status" value="1"/>
</dbReference>
<dbReference type="Gene3D" id="3.40.1390.10">
    <property type="entry name" value="MurE/MurF, N-terminal domain"/>
    <property type="match status" value="1"/>
</dbReference>
<dbReference type="HAMAP" id="MF_00208">
    <property type="entry name" value="MurE"/>
    <property type="match status" value="1"/>
</dbReference>
<dbReference type="InterPro" id="IPR036565">
    <property type="entry name" value="Mur-like_cat_sf"/>
</dbReference>
<dbReference type="InterPro" id="IPR004101">
    <property type="entry name" value="Mur_ligase_C"/>
</dbReference>
<dbReference type="InterPro" id="IPR036615">
    <property type="entry name" value="Mur_ligase_C_dom_sf"/>
</dbReference>
<dbReference type="InterPro" id="IPR013221">
    <property type="entry name" value="Mur_ligase_cen"/>
</dbReference>
<dbReference type="InterPro" id="IPR000713">
    <property type="entry name" value="Mur_ligase_N"/>
</dbReference>
<dbReference type="InterPro" id="IPR035911">
    <property type="entry name" value="MurE/MurF_N"/>
</dbReference>
<dbReference type="InterPro" id="IPR005761">
    <property type="entry name" value="UDP-N-AcMur-Glu-dNH2Pim_ligase"/>
</dbReference>
<dbReference type="NCBIfam" id="TIGR01085">
    <property type="entry name" value="murE"/>
    <property type="match status" value="1"/>
</dbReference>
<dbReference type="NCBIfam" id="NF001126">
    <property type="entry name" value="PRK00139.1-4"/>
    <property type="match status" value="1"/>
</dbReference>
<dbReference type="PANTHER" id="PTHR23135">
    <property type="entry name" value="MUR LIGASE FAMILY MEMBER"/>
    <property type="match status" value="1"/>
</dbReference>
<dbReference type="PANTHER" id="PTHR23135:SF4">
    <property type="entry name" value="UDP-N-ACETYLMURAMOYL-L-ALANYL-D-GLUTAMATE--2,6-DIAMINOPIMELATE LIGASE MURE HOMOLOG, CHLOROPLASTIC"/>
    <property type="match status" value="1"/>
</dbReference>
<dbReference type="Pfam" id="PF01225">
    <property type="entry name" value="Mur_ligase"/>
    <property type="match status" value="1"/>
</dbReference>
<dbReference type="Pfam" id="PF02875">
    <property type="entry name" value="Mur_ligase_C"/>
    <property type="match status" value="1"/>
</dbReference>
<dbReference type="Pfam" id="PF08245">
    <property type="entry name" value="Mur_ligase_M"/>
    <property type="match status" value="1"/>
</dbReference>
<dbReference type="SUPFAM" id="SSF53623">
    <property type="entry name" value="MurD-like peptide ligases, catalytic domain"/>
    <property type="match status" value="1"/>
</dbReference>
<dbReference type="SUPFAM" id="SSF53244">
    <property type="entry name" value="MurD-like peptide ligases, peptide-binding domain"/>
    <property type="match status" value="1"/>
</dbReference>
<dbReference type="SUPFAM" id="SSF63418">
    <property type="entry name" value="MurE/MurF N-terminal domain"/>
    <property type="match status" value="1"/>
</dbReference>
<sequence length="483" mass="53845">MKLKQLLQNIDYDLIKGDININIEGISYNSKKVKQNYVFVSIKGARFDGHDFIKEAAQNGAAAVIIDEDFHDSIENTTLVKVKNSKVALACLCNLFYEEPSRELNLVGVTGTNGKTTVIHYIRDMLEAFGNSTGTIGTLGYELKDKEINVEKINPTTPEALELNQILRDFIDKGAKNAVMEVTSSALMKHRVDYCSFKVGVFTNLSQDHLDEHGTIENYKNEKIKLFKMCPVGVINLDDNIAGEIIEKGTCEFFTYGVLTNADLTASDMVYKPNSVSFNVHYKGISSKVKVNVPGEFTVYNVLAAIGSLLCLGIDFESILKLVSSIKPVLGRLETINNPLNKNIIIDYAHTPDSLEKLLIMAREMTNGRIITVFGCGGDRDKSKRGLMGMAVGILSDYCIITSDNPRHEKPEDIIRDIERGMQTINSSYEKITDRRCAIKRGIEILKEEDILIIAGKGHEDYQIIGDNKVHFDDREVVNELLG</sequence>
<evidence type="ECO:0000255" key="1">
    <source>
        <dbReference type="HAMAP-Rule" id="MF_00208"/>
    </source>
</evidence>
<reference key="1">
    <citation type="journal article" date="2001" name="J. Bacteriol.">
        <title>Genome sequence and comparative analysis of the solvent-producing bacterium Clostridium acetobutylicum.</title>
        <authorList>
            <person name="Noelling J."/>
            <person name="Breton G."/>
            <person name="Omelchenko M.V."/>
            <person name="Makarova K.S."/>
            <person name="Zeng Q."/>
            <person name="Gibson R."/>
            <person name="Lee H.M."/>
            <person name="Dubois J."/>
            <person name="Qiu D."/>
            <person name="Hitti J."/>
            <person name="Wolf Y.I."/>
            <person name="Tatusov R.L."/>
            <person name="Sabathe F."/>
            <person name="Doucette-Stamm L.A."/>
            <person name="Soucaille P."/>
            <person name="Daly M.J."/>
            <person name="Bennett G.N."/>
            <person name="Koonin E.V."/>
            <person name="Smith D.R."/>
        </authorList>
    </citation>
    <scope>NUCLEOTIDE SEQUENCE [LARGE SCALE GENOMIC DNA]</scope>
    <source>
        <strain>ATCC 824 / DSM 792 / JCM 1419 / IAM 19013 / LMG 5710 / NBRC 13948 / NRRL B-527 / VKM B-1787 / 2291 / W</strain>
    </source>
</reference>
<proteinExistence type="inferred from homology"/>
<name>MURE2_CLOAB</name>
<keyword id="KW-0067">ATP-binding</keyword>
<keyword id="KW-0131">Cell cycle</keyword>
<keyword id="KW-0132">Cell division</keyword>
<keyword id="KW-0133">Cell shape</keyword>
<keyword id="KW-0961">Cell wall biogenesis/degradation</keyword>
<keyword id="KW-0963">Cytoplasm</keyword>
<keyword id="KW-0436">Ligase</keyword>
<keyword id="KW-0460">Magnesium</keyword>
<keyword id="KW-0547">Nucleotide-binding</keyword>
<keyword id="KW-0573">Peptidoglycan synthesis</keyword>
<keyword id="KW-1185">Reference proteome</keyword>
<accession>Q97FC1</accession>
<organism>
    <name type="scientific">Clostridium acetobutylicum (strain ATCC 824 / DSM 792 / JCM 1419 / IAM 19013 / LMG 5710 / NBRC 13948 / NRRL B-527 / VKM B-1787 / 2291 / W)</name>
    <dbReference type="NCBI Taxonomy" id="272562"/>
    <lineage>
        <taxon>Bacteria</taxon>
        <taxon>Bacillati</taxon>
        <taxon>Bacillota</taxon>
        <taxon>Clostridia</taxon>
        <taxon>Eubacteriales</taxon>
        <taxon>Clostridiaceae</taxon>
        <taxon>Clostridium</taxon>
    </lineage>
</organism>
<feature type="chain" id="PRO_0000101886" description="UDP-N-acetylmuramoyl-L-alanyl-D-glutamate--2,6-diaminopimelate ligase 2">
    <location>
        <begin position="1"/>
        <end position="483"/>
    </location>
</feature>
<feature type="short sequence motif" description="Meso-diaminopimelate recognition motif">
    <location>
        <begin position="404"/>
        <end position="407"/>
    </location>
</feature>
<feature type="binding site" evidence="1">
    <location>
        <position position="30"/>
    </location>
    <ligand>
        <name>UDP-N-acetyl-alpha-D-muramoyl-L-alanyl-D-glutamate</name>
        <dbReference type="ChEBI" id="CHEBI:83900"/>
    </ligand>
</feature>
<feature type="binding site" evidence="1">
    <location>
        <begin position="111"/>
        <end position="117"/>
    </location>
    <ligand>
        <name>ATP</name>
        <dbReference type="ChEBI" id="CHEBI:30616"/>
    </ligand>
</feature>
<feature type="binding site" evidence="1">
    <location>
        <begin position="156"/>
        <end position="157"/>
    </location>
    <ligand>
        <name>UDP-N-acetyl-alpha-D-muramoyl-L-alanyl-D-glutamate</name>
        <dbReference type="ChEBI" id="CHEBI:83900"/>
    </ligand>
</feature>
<feature type="binding site" evidence="1">
    <location>
        <position position="183"/>
    </location>
    <ligand>
        <name>UDP-N-acetyl-alpha-D-muramoyl-L-alanyl-D-glutamate</name>
        <dbReference type="ChEBI" id="CHEBI:83900"/>
    </ligand>
</feature>
<feature type="binding site" evidence="1">
    <location>
        <position position="191"/>
    </location>
    <ligand>
        <name>UDP-N-acetyl-alpha-D-muramoyl-L-alanyl-D-glutamate</name>
        <dbReference type="ChEBI" id="CHEBI:83900"/>
    </ligand>
</feature>
<feature type="binding site" evidence="1">
    <location>
        <position position="380"/>
    </location>
    <ligand>
        <name>meso-2,6-diaminopimelate</name>
        <dbReference type="ChEBI" id="CHEBI:57791"/>
    </ligand>
</feature>
<feature type="binding site" evidence="1">
    <location>
        <begin position="404"/>
        <end position="407"/>
    </location>
    <ligand>
        <name>meso-2,6-diaminopimelate</name>
        <dbReference type="ChEBI" id="CHEBI:57791"/>
    </ligand>
</feature>
<feature type="binding site" evidence="1">
    <location>
        <position position="456"/>
    </location>
    <ligand>
        <name>meso-2,6-diaminopimelate</name>
        <dbReference type="ChEBI" id="CHEBI:57791"/>
    </ligand>
</feature>
<feature type="binding site" evidence="1">
    <location>
        <position position="460"/>
    </location>
    <ligand>
        <name>meso-2,6-diaminopimelate</name>
        <dbReference type="ChEBI" id="CHEBI:57791"/>
    </ligand>
</feature>
<feature type="modified residue" description="N6-carboxylysine" evidence="1">
    <location>
        <position position="223"/>
    </location>
</feature>
<protein>
    <recommendedName>
        <fullName evidence="1">UDP-N-acetylmuramoyl-L-alanyl-D-glutamate--2,6-diaminopimelate ligase 2</fullName>
        <ecNumber evidence="1">6.3.2.13</ecNumber>
    </recommendedName>
    <alternativeName>
        <fullName evidence="1">Meso-A2pm-adding enzyme 2</fullName>
    </alternativeName>
    <alternativeName>
        <fullName evidence="1">Meso-diaminopimelate-adding enzyme 2</fullName>
    </alternativeName>
    <alternativeName>
        <fullName evidence="1">UDP-MurNAc-L-Ala-D-Glu:meso-diaminopimelate ligase 2</fullName>
    </alternativeName>
    <alternativeName>
        <fullName evidence="1">UDP-MurNAc-tripeptide synthetase 2</fullName>
    </alternativeName>
    <alternativeName>
        <fullName evidence="1">UDP-N-acetylmuramyl-tripeptide synthetase 2</fullName>
    </alternativeName>
</protein>